<accession>Q94AA1</accession>
<accession>B9DFQ8</accession>
<accession>Q67XL1</accession>
<accession>Q67Y57</accession>
<accession>Q9SF56</accession>
<sequence>MESRNDEEAPLISASGEDRKVRAGKCYTRDVHILSISFLLIFLAYGAAQNLETTVNKDLGTISLGILYVSFMFCSMVASLVVRLMGSKNALVLGTTGYWLFVAANLKPSWFTMVPASLYLGFAASIIWVGQGTYLTSIARSHATDHGLHEGSVIGVFNGEFWAMFACHQLFGNLITLALLKDGKEGSTSGTTLLMLVFLFSMTLGTILMFFIRKIDGEDGKGPVGSPVGLVDSLASLPRMIITPLLDIRMLLIVPLLAYSGLQQAFVWAEFTKEIVTPAIGVSGVGGAMAVYGALDAVCSMTAGRFTSGLSSITFIVSGGAVAQASVFLWLLLGYRQTSGVLGTAYPLIMAAILGIGDGILNTQISALLALLFKHDTEGAFAQLKVWQSAAIAIVFFLSPYISLQAMLIVMLVMRDFTVEETHFTSSLLFQNSLSRNSLRFRRCLTIKIWDSLPISWESSFSYW</sequence>
<organism>
    <name type="scientific">Arabidopsis thaliana</name>
    <name type="common">Mouse-ear cress</name>
    <dbReference type="NCBI Taxonomy" id="3702"/>
    <lineage>
        <taxon>Eukaryota</taxon>
        <taxon>Viridiplantae</taxon>
        <taxon>Streptophyta</taxon>
        <taxon>Embryophyta</taxon>
        <taxon>Tracheophyta</taxon>
        <taxon>Spermatophyta</taxon>
        <taxon>Magnoliopsida</taxon>
        <taxon>eudicotyledons</taxon>
        <taxon>Gunneridae</taxon>
        <taxon>Pentapetalae</taxon>
        <taxon>rosids</taxon>
        <taxon>malvids</taxon>
        <taxon>Brassicales</taxon>
        <taxon>Brassicaceae</taxon>
        <taxon>Camelineae</taxon>
        <taxon>Arabidopsis</taxon>
    </lineage>
</organism>
<feature type="chain" id="PRO_0000190043" description="UNC93-like protein 3">
    <location>
        <begin position="1"/>
        <end position="464"/>
    </location>
</feature>
<feature type="transmembrane region" description="Helical" evidence="1">
    <location>
        <begin position="31"/>
        <end position="51"/>
    </location>
</feature>
<feature type="transmembrane region" description="Helical" evidence="1">
    <location>
        <begin position="62"/>
        <end position="82"/>
    </location>
</feature>
<feature type="transmembrane region" description="Helical" evidence="1">
    <location>
        <begin position="84"/>
        <end position="104"/>
    </location>
</feature>
<feature type="transmembrane region" description="Helical" evidence="1">
    <location>
        <begin position="110"/>
        <end position="130"/>
    </location>
</feature>
<feature type="transmembrane region" description="Helical" evidence="1">
    <location>
        <begin position="160"/>
        <end position="180"/>
    </location>
</feature>
<feature type="transmembrane region" description="Helical" evidence="1">
    <location>
        <begin position="192"/>
        <end position="212"/>
    </location>
</feature>
<feature type="transmembrane region" description="Helical" evidence="1">
    <location>
        <begin position="251"/>
        <end position="271"/>
    </location>
</feature>
<feature type="transmembrane region" description="Helical" evidence="1">
    <location>
        <begin position="275"/>
        <end position="295"/>
    </location>
</feature>
<feature type="transmembrane region" description="Helical" evidence="1">
    <location>
        <begin position="313"/>
        <end position="333"/>
    </location>
</feature>
<feature type="transmembrane region" description="Helical" evidence="1">
    <location>
        <begin position="341"/>
        <end position="361"/>
    </location>
</feature>
<feature type="transmembrane region" description="Helical" evidence="1">
    <location>
        <begin position="392"/>
        <end position="412"/>
    </location>
</feature>
<feature type="splice variant" id="VSP_014037" description="In isoform 2." evidence="2 3">
    <original>RDFTVEETHFTSSLLFQNSLSRN</original>
    <variation>VCVSLFSFLFLALKVENVFTHDE</variation>
    <location>
        <begin position="415"/>
        <end position="437"/>
    </location>
</feature>
<feature type="splice variant" id="VSP_014038" description="In isoform 2." evidence="2 3">
    <location>
        <begin position="438"/>
        <end position="464"/>
    </location>
</feature>
<feature type="sequence conflict" description="In Ref. 4; BAD44374." evidence="4" ref="4">
    <original>K</original>
    <variation>R</variation>
    <location>
        <position position="385"/>
    </location>
</feature>
<proteinExistence type="evidence at transcript level"/>
<gene>
    <name type="ordered locus">At3g09470</name>
    <name type="ORF">F11F8.4</name>
</gene>
<reference key="1">
    <citation type="journal article" date="2000" name="Nature">
        <title>Sequence and analysis of chromosome 3 of the plant Arabidopsis thaliana.</title>
        <authorList>
            <person name="Salanoubat M."/>
            <person name="Lemcke K."/>
            <person name="Rieger M."/>
            <person name="Ansorge W."/>
            <person name="Unseld M."/>
            <person name="Fartmann B."/>
            <person name="Valle G."/>
            <person name="Bloecker H."/>
            <person name="Perez-Alonso M."/>
            <person name="Obermaier B."/>
            <person name="Delseny M."/>
            <person name="Boutry M."/>
            <person name="Grivell L.A."/>
            <person name="Mache R."/>
            <person name="Puigdomenech P."/>
            <person name="De Simone V."/>
            <person name="Choisne N."/>
            <person name="Artiguenave F."/>
            <person name="Robert C."/>
            <person name="Brottier P."/>
            <person name="Wincker P."/>
            <person name="Cattolico L."/>
            <person name="Weissenbach J."/>
            <person name="Saurin W."/>
            <person name="Quetier F."/>
            <person name="Schaefer M."/>
            <person name="Mueller-Auer S."/>
            <person name="Gabel C."/>
            <person name="Fuchs M."/>
            <person name="Benes V."/>
            <person name="Wurmbach E."/>
            <person name="Drzonek H."/>
            <person name="Erfle H."/>
            <person name="Jordan N."/>
            <person name="Bangert S."/>
            <person name="Wiedelmann R."/>
            <person name="Kranz H."/>
            <person name="Voss H."/>
            <person name="Holland R."/>
            <person name="Brandt P."/>
            <person name="Nyakatura G."/>
            <person name="Vezzi A."/>
            <person name="D'Angelo M."/>
            <person name="Pallavicini A."/>
            <person name="Toppo S."/>
            <person name="Simionati B."/>
            <person name="Conrad A."/>
            <person name="Hornischer K."/>
            <person name="Kauer G."/>
            <person name="Loehnert T.-H."/>
            <person name="Nordsiek G."/>
            <person name="Reichelt J."/>
            <person name="Scharfe M."/>
            <person name="Schoen O."/>
            <person name="Bargues M."/>
            <person name="Terol J."/>
            <person name="Climent J."/>
            <person name="Navarro P."/>
            <person name="Collado C."/>
            <person name="Perez-Perez A."/>
            <person name="Ottenwaelder B."/>
            <person name="Duchemin D."/>
            <person name="Cooke R."/>
            <person name="Laudie M."/>
            <person name="Berger-Llauro C."/>
            <person name="Purnelle B."/>
            <person name="Masuy D."/>
            <person name="de Haan M."/>
            <person name="Maarse A.C."/>
            <person name="Alcaraz J.-P."/>
            <person name="Cottet A."/>
            <person name="Casacuberta E."/>
            <person name="Monfort A."/>
            <person name="Argiriou A."/>
            <person name="Flores M."/>
            <person name="Liguori R."/>
            <person name="Vitale D."/>
            <person name="Mannhaupt G."/>
            <person name="Haase D."/>
            <person name="Schoof H."/>
            <person name="Rudd S."/>
            <person name="Zaccaria P."/>
            <person name="Mewes H.-W."/>
            <person name="Mayer K.F.X."/>
            <person name="Kaul S."/>
            <person name="Town C.D."/>
            <person name="Koo H.L."/>
            <person name="Tallon L.J."/>
            <person name="Jenkins J."/>
            <person name="Rooney T."/>
            <person name="Rizzo M."/>
            <person name="Walts A."/>
            <person name="Utterback T."/>
            <person name="Fujii C.Y."/>
            <person name="Shea T.P."/>
            <person name="Creasy T.H."/>
            <person name="Haas B."/>
            <person name="Maiti R."/>
            <person name="Wu D."/>
            <person name="Peterson J."/>
            <person name="Van Aken S."/>
            <person name="Pai G."/>
            <person name="Militscher J."/>
            <person name="Sellers P."/>
            <person name="Gill J.E."/>
            <person name="Feldblyum T.V."/>
            <person name="Preuss D."/>
            <person name="Lin X."/>
            <person name="Nierman W.C."/>
            <person name="Salzberg S.L."/>
            <person name="White O."/>
            <person name="Venter J.C."/>
            <person name="Fraser C.M."/>
            <person name="Kaneko T."/>
            <person name="Nakamura Y."/>
            <person name="Sato S."/>
            <person name="Kato T."/>
            <person name="Asamizu E."/>
            <person name="Sasamoto S."/>
            <person name="Kimura T."/>
            <person name="Idesawa K."/>
            <person name="Kawashima K."/>
            <person name="Kishida Y."/>
            <person name="Kiyokawa C."/>
            <person name="Kohara M."/>
            <person name="Matsumoto M."/>
            <person name="Matsuno A."/>
            <person name="Muraki A."/>
            <person name="Nakayama S."/>
            <person name="Nakazaki N."/>
            <person name="Shinpo S."/>
            <person name="Takeuchi C."/>
            <person name="Wada T."/>
            <person name="Watanabe A."/>
            <person name="Yamada M."/>
            <person name="Yasuda M."/>
            <person name="Tabata S."/>
        </authorList>
    </citation>
    <scope>NUCLEOTIDE SEQUENCE [LARGE SCALE GENOMIC DNA]</scope>
    <source>
        <strain>cv. Columbia</strain>
    </source>
</reference>
<reference key="2">
    <citation type="journal article" date="2017" name="Plant J.">
        <title>Araport11: a complete reannotation of the Arabidopsis thaliana reference genome.</title>
        <authorList>
            <person name="Cheng C.Y."/>
            <person name="Krishnakumar V."/>
            <person name="Chan A.P."/>
            <person name="Thibaud-Nissen F."/>
            <person name="Schobel S."/>
            <person name="Town C.D."/>
        </authorList>
    </citation>
    <scope>GENOME REANNOTATION</scope>
    <source>
        <strain>cv. Columbia</strain>
    </source>
</reference>
<reference key="3">
    <citation type="journal article" date="2003" name="Science">
        <title>Empirical analysis of transcriptional activity in the Arabidopsis genome.</title>
        <authorList>
            <person name="Yamada K."/>
            <person name="Lim J."/>
            <person name="Dale J.M."/>
            <person name="Chen H."/>
            <person name="Shinn P."/>
            <person name="Palm C.J."/>
            <person name="Southwick A.M."/>
            <person name="Wu H.C."/>
            <person name="Kim C.J."/>
            <person name="Nguyen M."/>
            <person name="Pham P.K."/>
            <person name="Cheuk R.F."/>
            <person name="Karlin-Newmann G."/>
            <person name="Liu S.X."/>
            <person name="Lam B."/>
            <person name="Sakano H."/>
            <person name="Wu T."/>
            <person name="Yu G."/>
            <person name="Miranda M."/>
            <person name="Quach H.L."/>
            <person name="Tripp M."/>
            <person name="Chang C.H."/>
            <person name="Lee J.M."/>
            <person name="Toriumi M.J."/>
            <person name="Chan M.M."/>
            <person name="Tang C.C."/>
            <person name="Onodera C.S."/>
            <person name="Deng J.M."/>
            <person name="Akiyama K."/>
            <person name="Ansari Y."/>
            <person name="Arakawa T."/>
            <person name="Banh J."/>
            <person name="Banno F."/>
            <person name="Bowser L."/>
            <person name="Brooks S.Y."/>
            <person name="Carninci P."/>
            <person name="Chao Q."/>
            <person name="Choy N."/>
            <person name="Enju A."/>
            <person name="Goldsmith A.D."/>
            <person name="Gurjal M."/>
            <person name="Hansen N.F."/>
            <person name="Hayashizaki Y."/>
            <person name="Johnson-Hopson C."/>
            <person name="Hsuan V.W."/>
            <person name="Iida K."/>
            <person name="Karnes M."/>
            <person name="Khan S."/>
            <person name="Koesema E."/>
            <person name="Ishida J."/>
            <person name="Jiang P.X."/>
            <person name="Jones T."/>
            <person name="Kawai J."/>
            <person name="Kamiya A."/>
            <person name="Meyers C."/>
            <person name="Nakajima M."/>
            <person name="Narusaka M."/>
            <person name="Seki M."/>
            <person name="Sakurai T."/>
            <person name="Satou M."/>
            <person name="Tamse R."/>
            <person name="Vaysberg M."/>
            <person name="Wallender E.K."/>
            <person name="Wong C."/>
            <person name="Yamamura Y."/>
            <person name="Yuan S."/>
            <person name="Shinozaki K."/>
            <person name="Davis R.W."/>
            <person name="Theologis A."/>
            <person name="Ecker J.R."/>
        </authorList>
    </citation>
    <scope>NUCLEOTIDE SEQUENCE [LARGE SCALE MRNA] (ISOFORM 1)</scope>
    <source>
        <strain>cv. Columbia</strain>
    </source>
</reference>
<reference key="4">
    <citation type="submission" date="2004-09" db="EMBL/GenBank/DDBJ databases">
        <title>Large-scale analysis of RIKEN Arabidopsis full-length (RAFL) cDNAs.</title>
        <authorList>
            <person name="Totoki Y."/>
            <person name="Seki M."/>
            <person name="Ishida J."/>
            <person name="Nakajima M."/>
            <person name="Enju A."/>
            <person name="Kamiya A."/>
            <person name="Narusaka M."/>
            <person name="Shin-i T."/>
            <person name="Nakagawa M."/>
            <person name="Sakamoto N."/>
            <person name="Oishi K."/>
            <person name="Kohara Y."/>
            <person name="Kobayashi M."/>
            <person name="Toyoda A."/>
            <person name="Sakaki Y."/>
            <person name="Sakurai T."/>
            <person name="Iida K."/>
            <person name="Akiyama K."/>
            <person name="Satou M."/>
            <person name="Toyoda T."/>
            <person name="Konagaya A."/>
            <person name="Carninci P."/>
            <person name="Kawai J."/>
            <person name="Hayashizaki Y."/>
            <person name="Shinozaki K."/>
        </authorList>
    </citation>
    <scope>NUCLEOTIDE SEQUENCE [LARGE SCALE MRNA] (ISOFORM 2)</scope>
    <source>
        <strain>cv. Columbia</strain>
    </source>
</reference>
<reference key="5">
    <citation type="journal article" date="2009" name="DNA Res.">
        <title>Analysis of multiple occurrences of alternative splicing events in Arabidopsis thaliana using novel sequenced full-length cDNAs.</title>
        <authorList>
            <person name="Iida K."/>
            <person name="Fukami-Kobayashi K."/>
            <person name="Toyoda A."/>
            <person name="Sakaki Y."/>
            <person name="Kobayashi M."/>
            <person name="Seki M."/>
            <person name="Shinozaki K."/>
        </authorList>
    </citation>
    <scope>NUCLEOTIDE SEQUENCE [LARGE SCALE MRNA] (ISOFORM 2)</scope>
    <source>
        <strain>cv. Columbia</strain>
    </source>
</reference>
<evidence type="ECO:0000255" key="1"/>
<evidence type="ECO:0000303" key="2">
    <source>
    </source>
</evidence>
<evidence type="ECO:0000303" key="3">
    <source ref="4"/>
</evidence>
<evidence type="ECO:0000305" key="4"/>
<protein>
    <recommendedName>
        <fullName>UNC93-like protein 3</fullName>
    </recommendedName>
</protein>
<name>UN933_ARATH</name>
<dbReference type="EMBL" id="AC016661">
    <property type="protein sequence ID" value="AAF23279.1"/>
    <property type="status" value="ALT_SEQ"/>
    <property type="molecule type" value="Genomic_DNA"/>
</dbReference>
<dbReference type="EMBL" id="CP002686">
    <property type="protein sequence ID" value="AEE74771.1"/>
    <property type="molecule type" value="Genomic_DNA"/>
</dbReference>
<dbReference type="EMBL" id="AY049250">
    <property type="protein sequence ID" value="AAK83592.1"/>
    <property type="molecule type" value="mRNA"/>
</dbReference>
<dbReference type="EMBL" id="BT004735">
    <property type="protein sequence ID" value="AAO43565.1"/>
    <property type="molecule type" value="mRNA"/>
</dbReference>
<dbReference type="EMBL" id="AK176494">
    <property type="protein sequence ID" value="BAD44257.1"/>
    <property type="molecule type" value="mRNA"/>
</dbReference>
<dbReference type="EMBL" id="AK176611">
    <property type="protein sequence ID" value="BAD44374.1"/>
    <property type="molecule type" value="mRNA"/>
</dbReference>
<dbReference type="EMBL" id="AK176808">
    <property type="protein sequence ID" value="BAD44571.1"/>
    <property type="molecule type" value="mRNA"/>
</dbReference>
<dbReference type="EMBL" id="AK316867">
    <property type="protein sequence ID" value="BAH19575.1"/>
    <property type="molecule type" value="mRNA"/>
</dbReference>
<dbReference type="RefSeq" id="NP_850546.1">
    <molecule id="Q94AA1-2"/>
    <property type="nucleotide sequence ID" value="NM_180215.4"/>
</dbReference>
<dbReference type="SMR" id="Q94AA1"/>
<dbReference type="BioGRID" id="5438">
    <property type="interactions" value="1"/>
</dbReference>
<dbReference type="FunCoup" id="Q94AA1">
    <property type="interactions" value="813"/>
</dbReference>
<dbReference type="STRING" id="3702.Q94AA1"/>
<dbReference type="PaxDb" id="3702-AT3G09470.1"/>
<dbReference type="ProteomicsDB" id="245272">
    <molecule id="Q94AA1-1"/>
</dbReference>
<dbReference type="EnsemblPlants" id="AT3G09470.2">
    <molecule id="Q94AA1-2"/>
    <property type="protein sequence ID" value="AT3G09470.2"/>
    <property type="gene ID" value="AT3G09470"/>
</dbReference>
<dbReference type="GeneID" id="820104"/>
<dbReference type="Gramene" id="AT3G09470.2">
    <molecule id="Q94AA1-2"/>
    <property type="protein sequence ID" value="AT3G09470.2"/>
    <property type="gene ID" value="AT3G09470"/>
</dbReference>
<dbReference type="KEGG" id="ath:AT3G09470"/>
<dbReference type="Araport" id="AT3G09470"/>
<dbReference type="TAIR" id="AT3G09470">
    <property type="gene designation" value="ATUNC93"/>
</dbReference>
<dbReference type="eggNOG" id="KOG3097">
    <property type="taxonomic scope" value="Eukaryota"/>
</dbReference>
<dbReference type="HOGENOM" id="CLU_025356_1_1_1"/>
<dbReference type="InParanoid" id="Q94AA1"/>
<dbReference type="OMA" id="NTACIIA"/>
<dbReference type="PhylomeDB" id="Q94AA1"/>
<dbReference type="PRO" id="PR:Q94AA1"/>
<dbReference type="Proteomes" id="UP000006548">
    <property type="component" value="Chromosome 3"/>
</dbReference>
<dbReference type="ExpressionAtlas" id="Q94AA1">
    <property type="expression patterns" value="baseline and differential"/>
</dbReference>
<dbReference type="GO" id="GO:0005886">
    <property type="term" value="C:plasma membrane"/>
    <property type="evidence" value="ECO:0000314"/>
    <property type="project" value="TAIR"/>
</dbReference>
<dbReference type="GO" id="GO:0055075">
    <property type="term" value="P:potassium ion homeostasis"/>
    <property type="evidence" value="ECO:0000315"/>
    <property type="project" value="TAIR"/>
</dbReference>
<dbReference type="CDD" id="cd17338">
    <property type="entry name" value="MFS_unc93_like"/>
    <property type="match status" value="1"/>
</dbReference>
<dbReference type="InterPro" id="IPR010291">
    <property type="entry name" value="Ion_channel_UNC-93"/>
</dbReference>
<dbReference type="InterPro" id="IPR036259">
    <property type="entry name" value="MFS_trans_sf"/>
</dbReference>
<dbReference type="InterPro" id="IPR044771">
    <property type="entry name" value="UN933_plant"/>
</dbReference>
<dbReference type="InterPro" id="IPR051951">
    <property type="entry name" value="UNC-93_regulatory"/>
</dbReference>
<dbReference type="PANTHER" id="PTHR19444:SF13">
    <property type="entry name" value="PROTEIN UNC-93 HOMOLOG A"/>
    <property type="match status" value="1"/>
</dbReference>
<dbReference type="PANTHER" id="PTHR19444">
    <property type="entry name" value="UNC-93 RELATED"/>
    <property type="match status" value="1"/>
</dbReference>
<dbReference type="Pfam" id="PF05978">
    <property type="entry name" value="UNC-93"/>
    <property type="match status" value="2"/>
</dbReference>
<dbReference type="SUPFAM" id="SSF103473">
    <property type="entry name" value="MFS general substrate transporter"/>
    <property type="match status" value="1"/>
</dbReference>
<keyword id="KW-0025">Alternative splicing</keyword>
<keyword id="KW-0472">Membrane</keyword>
<keyword id="KW-1185">Reference proteome</keyword>
<keyword id="KW-0812">Transmembrane</keyword>
<keyword id="KW-1133">Transmembrane helix</keyword>
<comment type="subcellular location">
    <subcellularLocation>
        <location evidence="4">Membrane</location>
        <topology evidence="4">Multi-pass membrane protein</topology>
    </subcellularLocation>
</comment>
<comment type="alternative products">
    <event type="alternative splicing"/>
    <isoform>
        <id>Q94AA1-1</id>
        <name>1</name>
        <sequence type="displayed"/>
    </isoform>
    <isoform>
        <id>Q94AA1-2</id>
        <name>2</name>
        <sequence type="described" ref="VSP_014037 VSP_014038"/>
    </isoform>
</comment>
<comment type="similarity">
    <text evidence="4">Belongs to the unc-93 family.</text>
</comment>
<comment type="sequence caution" evidence="4">
    <conflict type="erroneous gene model prediction">
        <sequence resource="EMBL-CDS" id="AAF23279"/>
    </conflict>
</comment>